<organism>
    <name type="scientific">Yersinia pestis bv. Antiqua (strain Antiqua)</name>
    <dbReference type="NCBI Taxonomy" id="360102"/>
    <lineage>
        <taxon>Bacteria</taxon>
        <taxon>Pseudomonadati</taxon>
        <taxon>Pseudomonadota</taxon>
        <taxon>Gammaproteobacteria</taxon>
        <taxon>Enterobacterales</taxon>
        <taxon>Yersiniaceae</taxon>
        <taxon>Yersinia</taxon>
    </lineage>
</organism>
<sequence>MTTKRKAYVRTMAPNWWQQLGFYRFYMLREGTSIPAVWFSVLLIYGVFALKSGPAGWEGFVSFLQNPLVLFLNILTLFAALLHTKTWFELAPKAVNIIVKSEKMGPEPMIKALWVVTVVASAIILAVALL</sequence>
<feature type="chain" id="PRO_1000045539" description="Fumarate reductase subunit C">
    <location>
        <begin position="1"/>
        <end position="130"/>
    </location>
</feature>
<feature type="transmembrane region" description="Helical" evidence="1">
    <location>
        <begin position="30"/>
        <end position="50"/>
    </location>
</feature>
<feature type="transmembrane region" description="Helical" evidence="1">
    <location>
        <begin position="60"/>
        <end position="80"/>
    </location>
</feature>
<feature type="transmembrane region" description="Helical" evidence="1">
    <location>
        <begin position="110"/>
        <end position="130"/>
    </location>
</feature>
<accession>Q1C0Y6</accession>
<protein>
    <recommendedName>
        <fullName evidence="1">Fumarate reductase subunit C</fullName>
    </recommendedName>
    <alternativeName>
        <fullName evidence="1">Fumarate reductase 15 kDa hydrophobic protein</fullName>
    </alternativeName>
    <alternativeName>
        <fullName evidence="1">Quinol-fumarate reductase subunit C</fullName>
        <shortName evidence="1">QFR subunit C</shortName>
    </alternativeName>
</protein>
<proteinExistence type="inferred from homology"/>
<name>FRDC_YERPA</name>
<comment type="function">
    <text evidence="1">Two distinct, membrane-bound, FAD-containing enzymes are responsible for the catalysis of fumarate and succinate interconversion; fumarate reductase is used in anaerobic growth, and succinate dehydrogenase is used in aerobic growth. Anchors the catalytic components of the fumarate reductase complex to the cell inner membrane, binds quinones.</text>
</comment>
<comment type="subunit">
    <text evidence="1">Part of an enzyme complex containing four subunits: a flavoprotein (FrdA), an iron-sulfur protein (FrdB), and two hydrophobic anchor proteins (FrdC and FrdD).</text>
</comment>
<comment type="subcellular location">
    <subcellularLocation>
        <location evidence="1">Cell inner membrane</location>
        <topology evidence="1">Multi-pass membrane protein</topology>
    </subcellularLocation>
</comment>
<comment type="similarity">
    <text evidence="1">Belongs to the FrdC family.</text>
</comment>
<dbReference type="EMBL" id="CP000308">
    <property type="protein sequence ID" value="ABG15886.1"/>
    <property type="molecule type" value="Genomic_DNA"/>
</dbReference>
<dbReference type="RefSeq" id="WP_002209135.1">
    <property type="nucleotide sequence ID" value="NZ_CP009906.1"/>
</dbReference>
<dbReference type="SMR" id="Q1C0Y6"/>
<dbReference type="GeneID" id="57974250"/>
<dbReference type="KEGG" id="ypa:YPA_3925"/>
<dbReference type="Proteomes" id="UP000001971">
    <property type="component" value="Chromosome"/>
</dbReference>
<dbReference type="GO" id="GO:0045283">
    <property type="term" value="C:fumarate reductase complex"/>
    <property type="evidence" value="ECO:0007669"/>
    <property type="project" value="UniProtKB-UniRule"/>
</dbReference>
<dbReference type="GO" id="GO:0005886">
    <property type="term" value="C:plasma membrane"/>
    <property type="evidence" value="ECO:0007669"/>
    <property type="project" value="UniProtKB-SubCell"/>
</dbReference>
<dbReference type="GO" id="GO:0000104">
    <property type="term" value="F:succinate dehydrogenase activity"/>
    <property type="evidence" value="ECO:0007669"/>
    <property type="project" value="UniProtKB-UniRule"/>
</dbReference>
<dbReference type="CDD" id="cd00546">
    <property type="entry name" value="QFR_TypeD_subunitC"/>
    <property type="match status" value="1"/>
</dbReference>
<dbReference type="Gene3D" id="1.20.1300.10">
    <property type="entry name" value="Fumarate reductase/succinate dehydrogenase, transmembrane subunit"/>
    <property type="match status" value="1"/>
</dbReference>
<dbReference type="HAMAP" id="MF_00708">
    <property type="entry name" value="Fumarate_red_C"/>
    <property type="match status" value="1"/>
</dbReference>
<dbReference type="InterPro" id="IPR003510">
    <property type="entry name" value="Fumarate_red_C"/>
</dbReference>
<dbReference type="InterPro" id="IPR034804">
    <property type="entry name" value="SQR/QFR_C/D"/>
</dbReference>
<dbReference type="NCBIfam" id="NF003445">
    <property type="entry name" value="PRK04987.1"/>
    <property type="match status" value="1"/>
</dbReference>
<dbReference type="Pfam" id="PF02300">
    <property type="entry name" value="Fumarate_red_C"/>
    <property type="match status" value="1"/>
</dbReference>
<dbReference type="PIRSF" id="PIRSF000180">
    <property type="entry name" value="FrdC"/>
    <property type="match status" value="1"/>
</dbReference>
<dbReference type="SUPFAM" id="SSF81343">
    <property type="entry name" value="Fumarate reductase respiratory complex transmembrane subunits"/>
    <property type="match status" value="1"/>
</dbReference>
<reference key="1">
    <citation type="journal article" date="2006" name="J. Bacteriol.">
        <title>Complete genome sequence of Yersinia pestis strains Antiqua and Nepal516: evidence of gene reduction in an emerging pathogen.</title>
        <authorList>
            <person name="Chain P.S.G."/>
            <person name="Hu P."/>
            <person name="Malfatti S.A."/>
            <person name="Radnedge L."/>
            <person name="Larimer F."/>
            <person name="Vergez L.M."/>
            <person name="Worsham P."/>
            <person name="Chu M.C."/>
            <person name="Andersen G.L."/>
        </authorList>
    </citation>
    <scope>NUCLEOTIDE SEQUENCE [LARGE SCALE GENOMIC DNA]</scope>
    <source>
        <strain>Antiqua</strain>
    </source>
</reference>
<gene>
    <name evidence="1" type="primary">frdC</name>
    <name type="ordered locus">YPA_3925</name>
</gene>
<keyword id="KW-0997">Cell inner membrane</keyword>
<keyword id="KW-1003">Cell membrane</keyword>
<keyword id="KW-0472">Membrane</keyword>
<keyword id="KW-0812">Transmembrane</keyword>
<keyword id="KW-1133">Transmembrane helix</keyword>
<evidence type="ECO:0000255" key="1">
    <source>
        <dbReference type="HAMAP-Rule" id="MF_00708"/>
    </source>
</evidence>